<sequence length="566" mass="61196">MAIAIGLDFGSDSVRALAVDCATGEEIATSVEWYPRWQKGQFCDAPNNQFRHHPRDYIESMEAALKTVLAELSAEQRAAVVGIGVDTTGSTPAPIDADGNVLALRPEFAENPNAMFVLWKDHTAVEEAEEITRLCHAPGNVDYSRYIGGIYSSEWFWAKILHVTRQDSAVAQSAASWIELCDWVPALLSGTTRPQDIRRGRCSAGHKSLWHESWGGLPPASFFDELDPILNRHLPSPLFTDTWTADIPVGTLCPEWAQRLGLPESVVISGGAFDCHMGAVGAGAQPNALVKVIGTSTCDILIADKQSVGERAVKGICGQVDGSVVPGFIGLEAGQSAFGDIYAWFGRVLSWPLEQLAAQHPELKEQINASQKQLLPALTEAWAKNPSLDHLPVVLDWFNGRRTPNANQRLKGVITDLNLATDAPLLFGGLIAATAFGARAIMECFTDQGIAVNNVMALGGIARKNQVIMQACCDVLNRPLQIVASDQCCALGAAIFAAVAAKVHADIPSAQQKMASAVEKTLQPRSEQAQRFEQLYRRYQQWAMSAEQHYPPTSAPAQAAQAVPTL</sequence>
<protein>
    <recommendedName>
        <fullName evidence="1">Ribulokinase</fullName>
        <ecNumber evidence="1">2.7.1.16</ecNumber>
    </recommendedName>
</protein>
<name>ARAB_ECO45</name>
<organism>
    <name type="scientific">Escherichia coli O45:K1 (strain S88 / ExPEC)</name>
    <dbReference type="NCBI Taxonomy" id="585035"/>
    <lineage>
        <taxon>Bacteria</taxon>
        <taxon>Pseudomonadati</taxon>
        <taxon>Pseudomonadota</taxon>
        <taxon>Gammaproteobacteria</taxon>
        <taxon>Enterobacterales</taxon>
        <taxon>Enterobacteriaceae</taxon>
        <taxon>Escherichia</taxon>
    </lineage>
</organism>
<accession>B7MAI6</accession>
<reference key="1">
    <citation type="journal article" date="2009" name="PLoS Genet.">
        <title>Organised genome dynamics in the Escherichia coli species results in highly diverse adaptive paths.</title>
        <authorList>
            <person name="Touchon M."/>
            <person name="Hoede C."/>
            <person name="Tenaillon O."/>
            <person name="Barbe V."/>
            <person name="Baeriswyl S."/>
            <person name="Bidet P."/>
            <person name="Bingen E."/>
            <person name="Bonacorsi S."/>
            <person name="Bouchier C."/>
            <person name="Bouvet O."/>
            <person name="Calteau A."/>
            <person name="Chiapello H."/>
            <person name="Clermont O."/>
            <person name="Cruveiller S."/>
            <person name="Danchin A."/>
            <person name="Diard M."/>
            <person name="Dossat C."/>
            <person name="Karoui M.E."/>
            <person name="Frapy E."/>
            <person name="Garry L."/>
            <person name="Ghigo J.M."/>
            <person name="Gilles A.M."/>
            <person name="Johnson J."/>
            <person name="Le Bouguenec C."/>
            <person name="Lescat M."/>
            <person name="Mangenot S."/>
            <person name="Martinez-Jehanne V."/>
            <person name="Matic I."/>
            <person name="Nassif X."/>
            <person name="Oztas S."/>
            <person name="Petit M.A."/>
            <person name="Pichon C."/>
            <person name="Rouy Z."/>
            <person name="Ruf C.S."/>
            <person name="Schneider D."/>
            <person name="Tourret J."/>
            <person name="Vacherie B."/>
            <person name="Vallenet D."/>
            <person name="Medigue C."/>
            <person name="Rocha E.P.C."/>
            <person name="Denamur E."/>
        </authorList>
    </citation>
    <scope>NUCLEOTIDE SEQUENCE [LARGE SCALE GENOMIC DNA]</scope>
    <source>
        <strain>S88 / ExPEC</strain>
    </source>
</reference>
<comment type="catalytic activity">
    <reaction evidence="1">
        <text>D-ribulose + ATP = D-ribulose 5-phosphate + ADP + H(+)</text>
        <dbReference type="Rhea" id="RHEA:17601"/>
        <dbReference type="ChEBI" id="CHEBI:15378"/>
        <dbReference type="ChEBI" id="CHEBI:17173"/>
        <dbReference type="ChEBI" id="CHEBI:30616"/>
        <dbReference type="ChEBI" id="CHEBI:58121"/>
        <dbReference type="ChEBI" id="CHEBI:456216"/>
        <dbReference type="EC" id="2.7.1.16"/>
    </reaction>
</comment>
<comment type="catalytic activity">
    <reaction evidence="1">
        <text>L-ribulose + ATP = L-ribulose 5-phosphate + ADP + H(+)</text>
        <dbReference type="Rhea" id="RHEA:22072"/>
        <dbReference type="ChEBI" id="CHEBI:15378"/>
        <dbReference type="ChEBI" id="CHEBI:16880"/>
        <dbReference type="ChEBI" id="CHEBI:30616"/>
        <dbReference type="ChEBI" id="CHEBI:58226"/>
        <dbReference type="ChEBI" id="CHEBI:456216"/>
        <dbReference type="EC" id="2.7.1.16"/>
    </reaction>
</comment>
<comment type="pathway">
    <text evidence="1">Carbohydrate degradation; L-arabinose degradation via L-ribulose; D-xylulose 5-phosphate from L-arabinose (bacterial route): step 2/3.</text>
</comment>
<comment type="similarity">
    <text evidence="1">Belongs to the ribulokinase family.</text>
</comment>
<keyword id="KW-0054">Arabinose catabolism</keyword>
<keyword id="KW-0067">ATP-binding</keyword>
<keyword id="KW-0119">Carbohydrate metabolism</keyword>
<keyword id="KW-0418">Kinase</keyword>
<keyword id="KW-0547">Nucleotide-binding</keyword>
<keyword id="KW-1185">Reference proteome</keyword>
<keyword id="KW-0808">Transferase</keyword>
<feature type="chain" id="PRO_1000127626" description="Ribulokinase">
    <location>
        <begin position="1"/>
        <end position="566"/>
    </location>
</feature>
<dbReference type="EC" id="2.7.1.16" evidence="1"/>
<dbReference type="EMBL" id="CU928161">
    <property type="protein sequence ID" value="CAR01432.1"/>
    <property type="molecule type" value="Genomic_DNA"/>
</dbReference>
<dbReference type="RefSeq" id="WP_000951841.1">
    <property type="nucleotide sequence ID" value="NC_011742.1"/>
</dbReference>
<dbReference type="SMR" id="B7MAI6"/>
<dbReference type="KEGG" id="ecz:ECS88_0066"/>
<dbReference type="HOGENOM" id="CLU_009281_9_1_6"/>
<dbReference type="UniPathway" id="UPA00145">
    <property type="reaction ID" value="UER00566"/>
</dbReference>
<dbReference type="Proteomes" id="UP000000747">
    <property type="component" value="Chromosome"/>
</dbReference>
<dbReference type="GO" id="GO:0005737">
    <property type="term" value="C:cytoplasm"/>
    <property type="evidence" value="ECO:0007669"/>
    <property type="project" value="TreeGrafter"/>
</dbReference>
<dbReference type="GO" id="GO:0005524">
    <property type="term" value="F:ATP binding"/>
    <property type="evidence" value="ECO:0007669"/>
    <property type="project" value="UniProtKB-KW"/>
</dbReference>
<dbReference type="GO" id="GO:0019150">
    <property type="term" value="F:D-ribulokinase activity"/>
    <property type="evidence" value="ECO:0007669"/>
    <property type="project" value="TreeGrafter"/>
</dbReference>
<dbReference type="GO" id="GO:0008741">
    <property type="term" value="F:ribulokinase activity"/>
    <property type="evidence" value="ECO:0007669"/>
    <property type="project" value="UniProtKB-UniRule"/>
</dbReference>
<dbReference type="GO" id="GO:0019569">
    <property type="term" value="P:L-arabinose catabolic process to xylulose 5-phosphate"/>
    <property type="evidence" value="ECO:0007669"/>
    <property type="project" value="UniProtKB-UniRule"/>
</dbReference>
<dbReference type="CDD" id="cd07781">
    <property type="entry name" value="ASKHA_NBD_FGGY_L-RBK"/>
    <property type="match status" value="1"/>
</dbReference>
<dbReference type="Gene3D" id="1.20.58.2240">
    <property type="match status" value="1"/>
</dbReference>
<dbReference type="Gene3D" id="3.30.420.40">
    <property type="match status" value="1"/>
</dbReference>
<dbReference type="HAMAP" id="MF_00520">
    <property type="entry name" value="Ribulokinase"/>
    <property type="match status" value="1"/>
</dbReference>
<dbReference type="InterPro" id="IPR043129">
    <property type="entry name" value="ATPase_NBD"/>
</dbReference>
<dbReference type="InterPro" id="IPR018485">
    <property type="entry name" value="FGGY_C"/>
</dbReference>
<dbReference type="InterPro" id="IPR005929">
    <property type="entry name" value="Ribulokinase"/>
</dbReference>
<dbReference type="NCBIfam" id="TIGR01234">
    <property type="entry name" value="L-ribulokinase"/>
    <property type="match status" value="1"/>
</dbReference>
<dbReference type="NCBIfam" id="NF003154">
    <property type="entry name" value="PRK04123.1"/>
    <property type="match status" value="1"/>
</dbReference>
<dbReference type="PANTHER" id="PTHR43435:SF4">
    <property type="entry name" value="FGGY CARBOHYDRATE KINASE DOMAIN-CONTAINING PROTEIN"/>
    <property type="match status" value="1"/>
</dbReference>
<dbReference type="PANTHER" id="PTHR43435">
    <property type="entry name" value="RIBULOKINASE"/>
    <property type="match status" value="1"/>
</dbReference>
<dbReference type="Pfam" id="PF02782">
    <property type="entry name" value="FGGY_C"/>
    <property type="match status" value="1"/>
</dbReference>
<dbReference type="SUPFAM" id="SSF53067">
    <property type="entry name" value="Actin-like ATPase domain"/>
    <property type="match status" value="2"/>
</dbReference>
<gene>
    <name evidence="1" type="primary">araB</name>
    <name type="ordered locus">ECS88_0066</name>
</gene>
<evidence type="ECO:0000255" key="1">
    <source>
        <dbReference type="HAMAP-Rule" id="MF_00520"/>
    </source>
</evidence>
<proteinExistence type="inferred from homology"/>